<dbReference type="EMBL" id="AF305417">
    <property type="protein sequence ID" value="AAG17931.1"/>
    <property type="molecule type" value="mRNA"/>
</dbReference>
<dbReference type="EMBL" id="AAFI02000126">
    <property type="protein sequence ID" value="EAL62962.1"/>
    <property type="molecule type" value="Genomic_DNA"/>
</dbReference>
<dbReference type="RefSeq" id="XP_636508.1">
    <property type="nucleotide sequence ID" value="XM_631416.1"/>
</dbReference>
<dbReference type="SMR" id="Q54I71"/>
<dbReference type="FunCoup" id="Q54I71">
    <property type="interactions" value="684"/>
</dbReference>
<dbReference type="STRING" id="44689.Q54I71"/>
<dbReference type="PaxDb" id="44689-DDB0191132"/>
<dbReference type="EnsemblProtists" id="EAL62962">
    <property type="protein sequence ID" value="EAL62962"/>
    <property type="gene ID" value="DDB_G0288877"/>
</dbReference>
<dbReference type="GeneID" id="8626891"/>
<dbReference type="KEGG" id="ddi:DDB_G0288877"/>
<dbReference type="dictyBase" id="DDB_G0288877">
    <property type="gene designation" value="aarA"/>
</dbReference>
<dbReference type="VEuPathDB" id="AmoebaDB:DDB_G0288877"/>
<dbReference type="eggNOG" id="KOG4199">
    <property type="taxonomic scope" value="Eukaryota"/>
</dbReference>
<dbReference type="HOGENOM" id="CLU_368213_0_0_1"/>
<dbReference type="InParanoid" id="Q54I71"/>
<dbReference type="OMA" id="SLMEIAC"/>
<dbReference type="PRO" id="PR:Q54I71"/>
<dbReference type="Proteomes" id="UP000002195">
    <property type="component" value="Chromosome 5"/>
</dbReference>
<dbReference type="GO" id="GO:0005912">
    <property type="term" value="C:adherens junction"/>
    <property type="evidence" value="ECO:0000314"/>
    <property type="project" value="dictyBase"/>
</dbReference>
<dbReference type="GO" id="GO:0045180">
    <property type="term" value="C:basal cortex"/>
    <property type="evidence" value="ECO:0000314"/>
    <property type="project" value="dictyBase"/>
</dbReference>
<dbReference type="GO" id="GO:0005911">
    <property type="term" value="C:cell-cell junction"/>
    <property type="evidence" value="ECO:0000304"/>
    <property type="project" value="dictyBase"/>
</dbReference>
<dbReference type="GO" id="GO:0005813">
    <property type="term" value="C:centrosome"/>
    <property type="evidence" value="ECO:0000304"/>
    <property type="project" value="dictyBase"/>
</dbReference>
<dbReference type="GO" id="GO:0005737">
    <property type="term" value="C:cytoplasm"/>
    <property type="evidence" value="ECO:0000314"/>
    <property type="project" value="dictyBase"/>
</dbReference>
<dbReference type="GO" id="GO:0045294">
    <property type="term" value="F:alpha-catenin binding"/>
    <property type="evidence" value="ECO:0000353"/>
    <property type="project" value="dictyBase"/>
</dbReference>
<dbReference type="GO" id="GO:0031032">
    <property type="term" value="P:actomyosin structure organization"/>
    <property type="evidence" value="ECO:0000315"/>
    <property type="project" value="dictyBase"/>
</dbReference>
<dbReference type="GO" id="GO:0007155">
    <property type="term" value="P:cell adhesion"/>
    <property type="evidence" value="ECO:0007669"/>
    <property type="project" value="UniProtKB-KW"/>
</dbReference>
<dbReference type="GO" id="GO:0048870">
    <property type="term" value="P:cell motility"/>
    <property type="evidence" value="ECO:0000316"/>
    <property type="project" value="dictyBase"/>
</dbReference>
<dbReference type="GO" id="GO:0051642">
    <property type="term" value="P:centrosome localization"/>
    <property type="evidence" value="ECO:0000315"/>
    <property type="project" value="dictyBase"/>
</dbReference>
<dbReference type="GO" id="GO:0031154">
    <property type="term" value="P:culmination involved in sorocarp development"/>
    <property type="evidence" value="ECO:0000270"/>
    <property type="project" value="dictyBase"/>
</dbReference>
<dbReference type="GO" id="GO:0140509">
    <property type="term" value="P:epithelium-like organization"/>
    <property type="evidence" value="ECO:0000315"/>
    <property type="project" value="dictyBase"/>
</dbReference>
<dbReference type="GO" id="GO:0061245">
    <property type="term" value="P:establishment or maintenance of bipolar cell polarity"/>
    <property type="evidence" value="ECO:0000315"/>
    <property type="project" value="dictyBase"/>
</dbReference>
<dbReference type="GO" id="GO:0051645">
    <property type="term" value="P:Golgi localization"/>
    <property type="evidence" value="ECO:0000315"/>
    <property type="project" value="dictyBase"/>
</dbReference>
<dbReference type="GO" id="GO:0051495">
    <property type="term" value="P:positive regulation of cytoskeleton organization"/>
    <property type="evidence" value="ECO:0000315"/>
    <property type="project" value="dictyBase"/>
</dbReference>
<dbReference type="GO" id="GO:0008104">
    <property type="term" value="P:protein localization"/>
    <property type="evidence" value="ECO:0000315"/>
    <property type="project" value="dictyBase"/>
</dbReference>
<dbReference type="GO" id="GO:0009306">
    <property type="term" value="P:protein secretion"/>
    <property type="evidence" value="ECO:0000315"/>
    <property type="project" value="dictyBase"/>
</dbReference>
<dbReference type="GO" id="GO:0010468">
    <property type="term" value="P:regulation of gene expression"/>
    <property type="evidence" value="ECO:0000270"/>
    <property type="project" value="dictyBase"/>
</dbReference>
<dbReference type="GO" id="GO:0044671">
    <property type="term" value="P:sorocarp spore cell differentiation"/>
    <property type="evidence" value="ECO:0000315"/>
    <property type="project" value="dictyBase"/>
</dbReference>
<dbReference type="GO" id="GO:0031150">
    <property type="term" value="P:sorocarp stalk development"/>
    <property type="evidence" value="ECO:0000315"/>
    <property type="project" value="dictyBase"/>
</dbReference>
<dbReference type="GO" id="GO:0036360">
    <property type="term" value="P:sorocarp stalk morphogenesis"/>
    <property type="evidence" value="ECO:0000315"/>
    <property type="project" value="dictyBase"/>
</dbReference>
<dbReference type="CDD" id="cd09917">
    <property type="entry name" value="F-box_SF"/>
    <property type="match status" value="1"/>
</dbReference>
<dbReference type="Gene3D" id="1.20.1280.50">
    <property type="match status" value="1"/>
</dbReference>
<dbReference type="Gene3D" id="1.25.10.10">
    <property type="entry name" value="Leucine-rich Repeat Variant"/>
    <property type="match status" value="2"/>
</dbReference>
<dbReference type="InterPro" id="IPR011989">
    <property type="entry name" value="ARM-like"/>
</dbReference>
<dbReference type="InterPro" id="IPR016024">
    <property type="entry name" value="ARM-type_fold"/>
</dbReference>
<dbReference type="InterPro" id="IPR056597">
    <property type="entry name" value="ARM_LRRK2"/>
</dbReference>
<dbReference type="InterPro" id="IPR000225">
    <property type="entry name" value="Armadillo"/>
</dbReference>
<dbReference type="InterPro" id="IPR036047">
    <property type="entry name" value="F-box-like_dom_sf"/>
</dbReference>
<dbReference type="InterPro" id="IPR001810">
    <property type="entry name" value="F-box_dom"/>
</dbReference>
<dbReference type="PANTHER" id="PTHR22895">
    <property type="entry name" value="ARMADILLO REPEAT-CONTAINING PROTEIN 6"/>
    <property type="match status" value="1"/>
</dbReference>
<dbReference type="PANTHER" id="PTHR22895:SF0">
    <property type="entry name" value="ARMADILLO REPEAT-CONTAINING PROTEIN 6"/>
    <property type="match status" value="1"/>
</dbReference>
<dbReference type="Pfam" id="PF23744">
    <property type="entry name" value="ARM_LRRK2"/>
    <property type="match status" value="1"/>
</dbReference>
<dbReference type="Pfam" id="PF12937">
    <property type="entry name" value="F-box-like"/>
    <property type="match status" value="1"/>
</dbReference>
<dbReference type="SMART" id="SM00185">
    <property type="entry name" value="ARM"/>
    <property type="match status" value="6"/>
</dbReference>
<dbReference type="SUPFAM" id="SSF48371">
    <property type="entry name" value="ARM repeat"/>
    <property type="match status" value="1"/>
</dbReference>
<dbReference type="SUPFAM" id="SSF81383">
    <property type="entry name" value="F-box domain"/>
    <property type="match status" value="1"/>
</dbReference>
<dbReference type="PROSITE" id="PS50176">
    <property type="entry name" value="ARM_REPEAT"/>
    <property type="match status" value="5"/>
</dbReference>
<dbReference type="PROSITE" id="PS50181">
    <property type="entry name" value="FBOX"/>
    <property type="match status" value="1"/>
</dbReference>
<accession>Q54I71</accession>
<accession>Q9GSG6</accession>
<keyword id="KW-0130">Cell adhesion</keyword>
<keyword id="KW-0965">Cell junction</keyword>
<keyword id="KW-0175">Coiled coil</keyword>
<keyword id="KW-0963">Cytoplasm</keyword>
<keyword id="KW-0217">Developmental protein</keyword>
<keyword id="KW-1185">Reference proteome</keyword>
<keyword id="KW-0677">Repeat</keyword>
<organism>
    <name type="scientific">Dictyostelium discoideum</name>
    <name type="common">Social amoeba</name>
    <dbReference type="NCBI Taxonomy" id="44689"/>
    <lineage>
        <taxon>Eukaryota</taxon>
        <taxon>Amoebozoa</taxon>
        <taxon>Evosea</taxon>
        <taxon>Eumycetozoa</taxon>
        <taxon>Dictyostelia</taxon>
        <taxon>Dictyosteliales</taxon>
        <taxon>Dictyosteliaceae</taxon>
        <taxon>Dictyostelium</taxon>
    </lineage>
</organism>
<proteinExistence type="evidence at transcript level"/>
<sequence>MNDCGSLFNKKLFKMNLLFKHLKLQQHLKLQQKPLLNNSSINNNINNNNNNNNNNNSNNDSNNTNTNIFNNSFLNSDLIERLIIKFTIGYLKNNITEDYIEQILLENQNNFIKSTTTSNYILEENNNNNNNNNNNNNNNNNNNNNNNNNNNNNNNNNSSSSSSSILSKFNKLEEDNELELQKKQKQQLEQQEEELFNQFNFLEGIEDQNDFLSEQETIQKIKFLIKMTAKSMSNYSSPNTLIPSVSKTYISPFGLSSNGSTNNHNNNNNNNHHHHSNNGNLIESSNNVNNQLNVSNYNNNNSNHYDENNQFDIFLIPTEMLVHLLSFLSANDLWRISLTCKRIWYIVDVFKFWELLFEQTCPRIYYAMQFNSRWSNPTSFQSKMILCYIDRLPTDNYKNFDKSDESGQIKKIIGVMNENLHNPMILRETCYILKRLSYRQRKEDEHESLIARYGGISLILQAMKNHPYDAGVQEDACGALGNLTCDSPNNMGLYSNDNYLSVVEQGGIQLILQAMKNHMMNPGVQYNTSFVLRNLARNDVSESRVAIEGGIQSIATAMKNHPNHIGIQTQGCGALRNLGCNDSNKVLSAKEGGIGLILRAMRSFSSHPDLQLNGCGALRNLARNEDNKNMISRQNGIQLVLGAMSNHPDDPDVQDEGCAALINLAYQDEANEETIAREGGINLILKAMRNHPFHSGVQMQGRGALKNLSCNPKNKLTIARSGGIELMNIAMQNHPNFANRFLELSRILQVALEDGNI</sequence>
<reference key="1">
    <citation type="journal article" date="2000" name="Nature">
        <title>Adherens junctions and b-catenin mediated cell signalling in a non-metazoan organism.</title>
        <authorList>
            <person name="Grimson M.J."/>
            <person name="Coates J.C."/>
            <person name="Reynolds J.P."/>
            <person name="Shipman M."/>
            <person name="Blanton R.L."/>
            <person name="Harwood A.J."/>
        </authorList>
    </citation>
    <scope>NUCLEOTIDE SEQUENCE [MRNA]</scope>
    <scope>FUNCTION</scope>
    <scope>DEVELOPMENTAL STAGE</scope>
    <scope>SUBCELLULAR LOCATION</scope>
    <scope>DISRUPTION PHENOTYPE</scope>
</reference>
<reference key="2">
    <citation type="journal article" date="2005" name="Nature">
        <title>The genome of the social amoeba Dictyostelium discoideum.</title>
        <authorList>
            <person name="Eichinger L."/>
            <person name="Pachebat J.A."/>
            <person name="Gloeckner G."/>
            <person name="Rajandream M.A."/>
            <person name="Sucgang R."/>
            <person name="Berriman M."/>
            <person name="Song J."/>
            <person name="Olsen R."/>
            <person name="Szafranski K."/>
            <person name="Xu Q."/>
            <person name="Tunggal B."/>
            <person name="Kummerfeld S."/>
            <person name="Madera M."/>
            <person name="Konfortov B.A."/>
            <person name="Rivero F."/>
            <person name="Bankier A.T."/>
            <person name="Lehmann R."/>
            <person name="Hamlin N."/>
            <person name="Davies R."/>
            <person name="Gaudet P."/>
            <person name="Fey P."/>
            <person name="Pilcher K."/>
            <person name="Chen G."/>
            <person name="Saunders D."/>
            <person name="Sodergren E.J."/>
            <person name="Davis P."/>
            <person name="Kerhornou A."/>
            <person name="Nie X."/>
            <person name="Hall N."/>
            <person name="Anjard C."/>
            <person name="Hemphill L."/>
            <person name="Bason N."/>
            <person name="Farbrother P."/>
            <person name="Desany B."/>
            <person name="Just E."/>
            <person name="Morio T."/>
            <person name="Rost R."/>
            <person name="Churcher C.M."/>
            <person name="Cooper J."/>
            <person name="Haydock S."/>
            <person name="van Driessche N."/>
            <person name="Cronin A."/>
            <person name="Goodhead I."/>
            <person name="Muzny D.M."/>
            <person name="Mourier T."/>
            <person name="Pain A."/>
            <person name="Lu M."/>
            <person name="Harper D."/>
            <person name="Lindsay R."/>
            <person name="Hauser H."/>
            <person name="James K.D."/>
            <person name="Quiles M."/>
            <person name="Madan Babu M."/>
            <person name="Saito T."/>
            <person name="Buchrieser C."/>
            <person name="Wardroper A."/>
            <person name="Felder M."/>
            <person name="Thangavelu M."/>
            <person name="Johnson D."/>
            <person name="Knights A."/>
            <person name="Loulseged H."/>
            <person name="Mungall K.L."/>
            <person name="Oliver K."/>
            <person name="Price C."/>
            <person name="Quail M.A."/>
            <person name="Urushihara H."/>
            <person name="Hernandez J."/>
            <person name="Rabbinowitsch E."/>
            <person name="Steffen D."/>
            <person name="Sanders M."/>
            <person name="Ma J."/>
            <person name="Kohara Y."/>
            <person name="Sharp S."/>
            <person name="Simmonds M.N."/>
            <person name="Spiegler S."/>
            <person name="Tivey A."/>
            <person name="Sugano S."/>
            <person name="White B."/>
            <person name="Walker D."/>
            <person name="Woodward J.R."/>
            <person name="Winckler T."/>
            <person name="Tanaka Y."/>
            <person name="Shaulsky G."/>
            <person name="Schleicher M."/>
            <person name="Weinstock G.M."/>
            <person name="Rosenthal A."/>
            <person name="Cox E.C."/>
            <person name="Chisholm R.L."/>
            <person name="Gibbs R.A."/>
            <person name="Loomis W.F."/>
            <person name="Platzer M."/>
            <person name="Kay R.R."/>
            <person name="Williams J.G."/>
            <person name="Dear P.H."/>
            <person name="Noegel A.A."/>
            <person name="Barrell B.G."/>
            <person name="Kuspa A."/>
        </authorList>
    </citation>
    <scope>NUCLEOTIDE SEQUENCE [LARGE SCALE GENOMIC DNA]</scope>
    <source>
        <strain>AX4</strain>
    </source>
</reference>
<reference key="3">
    <citation type="journal article" date="2001" name="J. Cell Sci.">
        <title>Cell-cell adhesion and signal transduction during Dictyostelium development.</title>
        <authorList>
            <person name="Coates J.C."/>
            <person name="Harwood A.J."/>
        </authorList>
    </citation>
    <scope>SUBCELLULAR LOCATION</scope>
    <scope>DISRUPTION PHENOTYPE</scope>
</reference>
<reference key="4">
    <citation type="journal article" date="2002" name="Mech. Dev.">
        <title>Loss of the beta-catenin homologue aardvark causes ectopic stalk formation in Dictyostelium.</title>
        <authorList>
            <person name="Coates J.C."/>
            <person name="Grimson M.J."/>
            <person name="Williams R.S.B."/>
            <person name="Bergman W."/>
            <person name="Blanton R.L."/>
            <person name="Harwood A.J."/>
        </authorList>
    </citation>
    <scope>DISRUPTION PHENOTYPE</scope>
</reference>
<reference key="5">
    <citation type="journal article" date="2008" name="Exp. Cell Res.">
        <title>Screening of genes involved in cell migration in Dictyostelium.</title>
        <authorList>
            <person name="Nagasaki A."/>
            <person name="Uyeda T.Q.P."/>
        </authorList>
    </citation>
    <scope>IDENTIFICATION</scope>
</reference>
<evidence type="ECO:0000255" key="1"/>
<evidence type="ECO:0000255" key="2">
    <source>
        <dbReference type="PROSITE-ProRule" id="PRU00080"/>
    </source>
</evidence>
<evidence type="ECO:0000256" key="3">
    <source>
        <dbReference type="SAM" id="MobiDB-lite"/>
    </source>
</evidence>
<evidence type="ECO:0000269" key="4">
    <source>
    </source>
</evidence>
<evidence type="ECO:0000269" key="5">
    <source>
    </source>
</evidence>
<evidence type="ECO:0000269" key="6">
    <source>
    </source>
</evidence>
<evidence type="ECO:0000305" key="7"/>
<protein>
    <recommendedName>
        <fullName>Protein aardvark</fullName>
    </recommendedName>
    <alternativeName>
        <fullName>Suppressor of amiB protein 16</fullName>
    </alternativeName>
</protein>
<comment type="function">
    <text evidence="4">Required to regulate pattern formation during multi-cellular stages of development and for the formation of adherens junctions. Plays a structural role during the regulation of stalk formation. Involved in cell signaling. Required for spore-cell differentiation. Overexpression increases number and size of cell junctions and reduces spore-cell formation.</text>
</comment>
<comment type="subcellular location">
    <subcellularLocation>
        <location>Cytoplasm</location>
    </subcellularLocation>
    <subcellularLocation>
        <location>Cell junction</location>
    </subcellularLocation>
</comment>
<comment type="developmental stage">
    <text evidence="4">Localized at the cell junctions in the developing fruiting body.</text>
</comment>
<comment type="disruption phenotype">
    <text evidence="4 5 6">Complete loss of cell junctions. Lacks actin-containing adherens junctions at the top of the stalk tube. Has weak stalks causing the fruiting body to frequently collapse. Displays multiple stalks appearance during late development. Shows no defects in growth or division.</text>
</comment>
<comment type="similarity">
    <text evidence="7">Belongs to the beta-catenin family.</text>
</comment>
<feature type="chain" id="PRO_0000390561" description="Protein aardvark">
    <location>
        <begin position="1"/>
        <end position="757"/>
    </location>
</feature>
<feature type="domain" description="F-box" evidence="2">
    <location>
        <begin position="310"/>
        <end position="356"/>
    </location>
</feature>
<feature type="repeat" description="ARM 1">
    <location>
        <begin position="454"/>
        <end position="498"/>
    </location>
</feature>
<feature type="repeat" description="ARM 2">
    <location>
        <begin position="506"/>
        <end position="548"/>
    </location>
</feature>
<feature type="repeat" description="ARM 3">
    <location>
        <begin position="549"/>
        <end position="591"/>
    </location>
</feature>
<feature type="repeat" description="ARM 4">
    <location>
        <begin position="592"/>
        <end position="634"/>
    </location>
</feature>
<feature type="repeat" description="ARM 5">
    <location>
        <begin position="635"/>
        <end position="678"/>
    </location>
</feature>
<feature type="repeat" description="ARM 6">
    <location>
        <begin position="679"/>
        <end position="723"/>
    </location>
</feature>
<feature type="region of interest" description="Disordered" evidence="3">
    <location>
        <begin position="39"/>
        <end position="63"/>
    </location>
</feature>
<feature type="region of interest" description="Disordered" evidence="3">
    <location>
        <begin position="122"/>
        <end position="166"/>
    </location>
</feature>
<feature type="region of interest" description="Disordered" evidence="3">
    <location>
        <begin position="256"/>
        <end position="285"/>
    </location>
</feature>
<feature type="coiled-coil region" evidence="1">
    <location>
        <begin position="121"/>
        <end position="205"/>
    </location>
</feature>
<feature type="compositionally biased region" description="Low complexity" evidence="3">
    <location>
        <begin position="125"/>
        <end position="164"/>
    </location>
</feature>
<feature type="compositionally biased region" description="Low complexity" evidence="3">
    <location>
        <begin position="256"/>
        <end position="270"/>
    </location>
</feature>
<feature type="sequence conflict" description="In Ref. 1; AAG17931." evidence="7" ref="1">
    <original>R</original>
    <variation>K</variation>
    <location>
        <position position="544"/>
    </location>
</feature>
<gene>
    <name type="primary">aarA</name>
    <name type="synonym">aar</name>
    <name type="synonym">sab6</name>
    <name type="ORF">DDB_G0288877</name>
</gene>
<name>AARA_DICDI</name>